<protein>
    <recommendedName>
        <fullName evidence="3 4">Alpha-conotoxin AusIA</fullName>
    </recommendedName>
</protein>
<organism>
    <name type="scientific">Conus australis</name>
    <name type="common">Austral cone</name>
    <name type="synonym">Asprella australis</name>
    <dbReference type="NCBI Taxonomy" id="1519798"/>
    <lineage>
        <taxon>Eukaryota</taxon>
        <taxon>Metazoa</taxon>
        <taxon>Spiralia</taxon>
        <taxon>Lophotrochozoa</taxon>
        <taxon>Mollusca</taxon>
        <taxon>Gastropoda</taxon>
        <taxon>Caenogastropoda</taxon>
        <taxon>Neogastropoda</taxon>
        <taxon>Conoidea</taxon>
        <taxon>Conidae</taxon>
        <taxon>Conus</taxon>
        <taxon>Phasmoconus</taxon>
    </lineage>
</organism>
<accession>P0DL39</accession>
<name>CA1A_CONAV</name>
<evidence type="ECO:0000269" key="1">
    <source>
    </source>
</evidence>
<evidence type="ECO:0000269" key="2">
    <source>
    </source>
</evidence>
<evidence type="ECO:0000303" key="3">
    <source>
    </source>
</evidence>
<evidence type="ECO:0000303" key="4">
    <source>
    </source>
</evidence>
<evidence type="ECO:0000305" key="5"/>
<evidence type="ECO:0000305" key="6">
    <source>
    </source>
</evidence>
<evidence type="ECO:0007744" key="7">
    <source>
        <dbReference type="PDB" id="7N0W"/>
    </source>
</evidence>
<evidence type="ECO:0007744" key="8">
    <source>
        <dbReference type="PDB" id="7N0Y"/>
    </source>
</evidence>
<evidence type="ECO:0007829" key="9">
    <source>
        <dbReference type="PDB" id="7N0W"/>
    </source>
</evidence>
<evidence type="ECO:0007829" key="10">
    <source>
        <dbReference type="PDB" id="7N0Y"/>
    </source>
</evidence>
<dbReference type="PDB" id="7N0W">
    <property type="method" value="X-ray"/>
    <property type="resolution" value="2.46 A"/>
    <property type="chains" value="G=1-16"/>
</dbReference>
<dbReference type="PDB" id="7N0Y">
    <property type="method" value="X-ray"/>
    <property type="resolution" value="2.58 A"/>
    <property type="chains" value="G=1-16"/>
</dbReference>
<dbReference type="PDBsum" id="7N0W"/>
<dbReference type="PDBsum" id="7N0Y"/>
<dbReference type="SMR" id="P0DL39"/>
<dbReference type="GO" id="GO:0005576">
    <property type="term" value="C:extracellular region"/>
    <property type="evidence" value="ECO:0007669"/>
    <property type="project" value="UniProtKB-SubCell"/>
</dbReference>
<dbReference type="GO" id="GO:0035792">
    <property type="term" value="C:host cell postsynaptic membrane"/>
    <property type="evidence" value="ECO:0007669"/>
    <property type="project" value="UniProtKB-KW"/>
</dbReference>
<dbReference type="GO" id="GO:0030550">
    <property type="term" value="F:acetylcholine receptor inhibitor activity"/>
    <property type="evidence" value="ECO:0007669"/>
    <property type="project" value="UniProtKB-KW"/>
</dbReference>
<dbReference type="GO" id="GO:0099106">
    <property type="term" value="F:ion channel regulator activity"/>
    <property type="evidence" value="ECO:0007669"/>
    <property type="project" value="UniProtKB-KW"/>
</dbReference>
<dbReference type="GO" id="GO:0090729">
    <property type="term" value="F:toxin activity"/>
    <property type="evidence" value="ECO:0007669"/>
    <property type="project" value="UniProtKB-KW"/>
</dbReference>
<proteinExistence type="evidence at protein level"/>
<keyword id="KW-0002">3D-structure</keyword>
<keyword id="KW-0008">Acetylcholine receptor inhibiting toxin</keyword>
<keyword id="KW-0903">Direct protein sequencing</keyword>
<keyword id="KW-1015">Disulfide bond</keyword>
<keyword id="KW-0872">Ion channel impairing toxin</keyword>
<keyword id="KW-0528">Neurotoxin</keyword>
<keyword id="KW-0629">Postsynaptic neurotoxin</keyword>
<keyword id="KW-0964">Secreted</keyword>
<keyword id="KW-0800">Toxin</keyword>
<comment type="function">
    <text evidence="1 2">Alpha-conotoxins act on postsynaptic membranes, they bind to the nicotinic acetylcholine receptors (nAChR) and thus inhibit them. This peptide has been experimentally synthesized as AusIA-globular and AusIA-ribbon. Both forms are active on chicken alpha-7/CHRNA7 nAChR with similar potency (micromolar range).</text>
</comment>
<comment type="subcellular location">
    <subcellularLocation>
        <location evidence="1">Secreted</location>
    </subcellularLocation>
</comment>
<comment type="tissue specificity">
    <text evidence="6">Expressed by the venom duct.</text>
</comment>
<comment type="domain">
    <text evidence="5">The cysteine framework is I (CC-C-C). Alpha5/5 pattern.</text>
</comment>
<comment type="domain">
    <text evidence="2">The equipotent ability to inhibit alpha-7/CHRNA7 nAChR subunit by both the globular and ribbon toxin arise mainly from the insertion of an additional residue in the first loop and partly from residues in the termini.</text>
</comment>
<comment type="PTM">
    <text evidence="3">Two isomers (with different disulfide connectivity) have been synthesized (AusIA-globular (C1-C3, C2-C4) and AusIA-ribbon (C1-C4, C2-C3)). Only AusIA-globular contains the cysteine connectivity described as typical for native alpha-conotoxins. However, AusIA-ribbon is more potent than AusIA-globular, suggesting that another disulfide connectivity may exist in nature. Both isomers adopt very flexible structures without having a unique folded structure, lacking any stable alpha-helical and/or beta-turn units.</text>
</comment>
<comment type="mass spectrometry"/>
<comment type="miscellaneous">
    <text evidence="1">Neither AusIA-globular nor AusIA-ribbon shows effect on muscle nAChRs alpha-1-beta-1-epsilon-delta/CHRNA1-CHRNB1-CHRNE-CHRND (adult subtype) and alpha-1-beta-1-gamma-delta/CHRNA1-CHRNB1-CHRNG-CHRND (fetal subtype) and on neuronal nAChRs alpha-3-beta-4/CHRNA3-CHRNB4, alpha-4-beta-4/CHRNA4-CHRNB4 and alpha-4-beta-2/CHRNA4-CHRNB2.</text>
</comment>
<comment type="similarity">
    <text evidence="5">Belongs to the conotoxin A superfamily.</text>
</comment>
<sequence>SCCARNPACRHNHPCV</sequence>
<reference key="1">
    <citation type="journal article" date="2014" name="Toxicon">
        <title>Discovery of a new subclass of alpha-conotoxins in the venom of Conus australis.</title>
        <authorList>
            <person name="Lebbe E.K."/>
            <person name="Peigneur S."/>
            <person name="Maiti M."/>
            <person name="Mille B.G."/>
            <person name="Devi P."/>
            <person name="Ravichandran S."/>
            <person name="Lescrinier E."/>
            <person name="Waelkens E."/>
            <person name="D'Souza L."/>
            <person name="Herdewijn P."/>
            <person name="Tytgat J."/>
        </authorList>
    </citation>
    <scope>PROTEIN SEQUENCE</scope>
    <scope>FUNCTION</scope>
    <scope>SUBCELLULAR LOCATION</scope>
    <scope>MASS SPECTROMETRY</scope>
    <source>
        <tissue>Venom</tissue>
        <tissue>Venom duct</tissue>
    </source>
</reference>
<reference key="2">
    <citation type="journal article" date="2021" name="Sci. Rep.">
        <title>Rigidity of loop 1 contributes to equipotency of globular and ribbon isomers of alpha-conotoxin AusIA.</title>
        <authorList>
            <person name="Ho T.N.T."/>
            <person name="Abraham N."/>
            <person name="Lewis R.J."/>
        </authorList>
    </citation>
    <scope>X-RAY CRYSTALLOGRAPHY (2.46 ANGSTROMS) OF RIBBON AND GLOBULAR TOXINS IN COMPLEX WITH L.STAGNALIS ACETYLCHOLINE-BINDING PROTEIN</scope>
    <scope>3D-STRUCTURE MODELING IN COMPLEX WITH ALPHA-7/CHRNA7 NACHR</scope>
    <scope>SYNTHESIS</scope>
    <scope>MUTAGENESIS OF SER-1; ALA-4; ARG-5; ASN-6; PRO-7; ARG-10 AND HIS-11</scope>
</reference>
<feature type="peptide" id="PRO_0000431736" description="Alpha-conotoxin AusIA" evidence="1">
    <location>
        <begin position="1"/>
        <end position="16"/>
    </location>
</feature>
<feature type="site" description="Important for the structural rigidity of the globular toxin, which impacts ability to inhibit alpha-7/CHRNA7 nAChR">
    <location>
        <position position="4"/>
    </location>
</feature>
<feature type="site" description="Important for the structural rigidity of the globular toxin, which impacts ability to inhibit alpha-7/CHRNA7 nAChR">
    <location>
        <position position="5"/>
    </location>
</feature>
<feature type="disulfide bond" description="In AusIA-ribbon form; alternate" evidence="2 6 7">
    <location>
        <begin position="2"/>
        <end position="15"/>
    </location>
</feature>
<feature type="disulfide bond" description="In AusIA-globular form; alternate" evidence="2 8">
    <location>
        <begin position="2"/>
        <end position="9"/>
    </location>
</feature>
<feature type="disulfide bond" description="In AusIA-globular form; alternate" evidence="2 8">
    <location>
        <begin position="3"/>
        <end position="15"/>
    </location>
</feature>
<feature type="disulfide bond" description="In AusIA-ribbon form; alternate" evidence="2 6 7">
    <location>
        <begin position="3"/>
        <end position="9"/>
    </location>
</feature>
<feature type="mutagenesis site" description="No change in ability to inhibit alpha-7/CHRNA7 nAChR for globular toxin. 2-fold decrease in ability to inhibit alpha-7/CHRNA7 nAChR for ribbon toxin.">
    <original>S</original>
    <variation>G</variation>
    <location>
        <position position="1"/>
    </location>
</feature>
<feature type="mutagenesis site" description="1.5-fold decrease in ability to inhibit alpha-7/CHRNA7 nAChR for globular toxin. 2.65-fold decrease in ability to inhibit alpha-7/CHRNA7 nAChR for ribbon toxin.">
    <original>A</original>
    <variation>S</variation>
    <location>
        <position position="4"/>
    </location>
</feature>
<feature type="mutagenesis site" description="47-fold increase in ability to inhibit alpha-7/CHRNA7 nAChR for globular toxin. 2.3-fold increase in ability to inhibit alpha-7/CHRNA7 nAChR for ribbon toxin.">
    <location>
        <position position="4"/>
    </location>
</feature>
<feature type="mutagenesis site" description="Loss of ability to inhibit alpha-7/CHRNA7 nAChR for both globular and ribbon toxins.">
    <original>R</original>
    <variation>A</variation>
    <location>
        <position position="5"/>
    </location>
</feature>
<feature type="mutagenesis site" description="Loss of ability to inhibit alpha-7/CHRNA7 nAChR for globular toxin. 2.7-fold decrease in ability to inhibit alpha-7/CHRNA7 nAChR for ribbon toxin.">
    <original>R</original>
    <variation>S</variation>
    <location>
        <position position="5"/>
    </location>
</feature>
<feature type="mutagenesis site" description="80-fold increase in ability to inhibit alpha-7/CHRNA7 nAChR for globular toxin. Loss of ability to inhibit alpha-7/CHRNA7 nAChR for ribbon toxin.">
    <location>
        <position position="5"/>
    </location>
</feature>
<feature type="mutagenesis site" description="Loss of ability to inhibit alpha-7/CHRNA7 nAChR for both globular and ribbon toxins.">
    <original>P</original>
    <variation>A</variation>
    <location>
        <position position="7"/>
    </location>
</feature>
<feature type="mutagenesis site" description="Loss of ability to inhibit alpha-7/CHRNA7 nAChR for both globular and ribbon toxins.">
    <original>R</original>
    <variation>A</variation>
    <location>
        <position position="10"/>
    </location>
</feature>
<feature type="mutagenesis site" description="Loss of ability to inhibit alpha-7/CHRNA7 nAChR for globular toxin. No change in ability to inhibit alpha-7/CHRNA7 nAChR for ribbon toxin.">
    <original>H</original>
    <variation>L</variation>
    <location>
        <position position="11"/>
    </location>
</feature>
<feature type="mutagenesis site" description="4-fold increase in ability to inhibit alpha-7/CHRNA7 nAChR for globular toxin. 2.3-fold decrease in ability to inhibit alpha-7/CHRNA7 nAChR for ribbon toxin.">
    <location>
        <position position="16"/>
    </location>
</feature>
<feature type="strand" evidence="10">
    <location>
        <begin position="4"/>
        <end position="6"/>
    </location>
</feature>
<feature type="helix" evidence="9">
    <location>
        <begin position="7"/>
        <end position="12"/>
    </location>
</feature>